<gene>
    <name evidence="6" type="primary">Ugt1a6</name>
    <name type="synonym">Ugt1</name>
    <name type="synonym">Ugt1a6a</name>
    <name type="synonym">Ugt1a7</name>
</gene>
<sequence length="531" mass="60439">MACLLPAAQTLPAGFLFLVLWASVLGDKLLVVPQDGSHWLSMKEIVEHLSERGHDIMVLVPEVNLLLGESKYYRRKIFSVTYSLEELQTRFRTFGNNHFLPGASLMGPLREYRNNMIVVDMFFSNCQSLLKDSATLSFLRENKFDALFTDPAMPCGVILAEYLNLPSVYLFRGFPCSLEHMLGQSPSPVSYVPRFYTKFSDHMTFPQRLANFIVNILENYLYYCLYSKYEIIASDLLKRDVSLPSLHQNSLWLLRYDFVFEYPRPVMPNMIFLGGINCKKKGKLTQEFEAYVNASGEHGIVVFSLGSMVSEIPEKKAMEIAEALGRIPQTVLWRYTGTRPSNLAKNTILVKWLPQNDLLGHPKTRAFITHSGSHGIYEGICNGVPMVMMPLFGDQMDNAKRMETRGAGVTLNVLEMTADDLENALKTVINNKSYKENIMRLSSLHKDRPIEPLDLAVFWVEYVMRHKGAPHLRPAAHDLTWYQYHSLDVIGFLLAIVLTVVFIVFKCCAYGCRKCFGGKGRVKKSHKSKTH</sequence>
<dbReference type="EC" id="2.4.1.17" evidence="4"/>
<dbReference type="EMBL" id="U09930">
    <property type="protein sequence ID" value="AAA51871.1"/>
    <property type="molecule type" value="mRNA"/>
</dbReference>
<dbReference type="EMBL" id="U16818">
    <property type="protein sequence ID" value="AAA65979.1"/>
    <property type="molecule type" value="mRNA"/>
</dbReference>
<dbReference type="EMBL" id="D87867">
    <property type="protein sequence ID" value="BAA13483.1"/>
    <property type="molecule type" value="mRNA"/>
</dbReference>
<dbReference type="EMBL" id="AY227197">
    <property type="protein sequence ID" value="AAP48596.1"/>
    <property type="molecule type" value="mRNA"/>
</dbReference>
<dbReference type="CCDS" id="CCDS48314.1">
    <molecule id="Q64435-1"/>
</dbReference>
<dbReference type="PIR" id="A55788">
    <property type="entry name" value="A55788"/>
</dbReference>
<dbReference type="RefSeq" id="NP_659545.2">
    <molecule id="Q64435-1"/>
    <property type="nucleotide sequence ID" value="NM_145079.3"/>
</dbReference>
<dbReference type="SMR" id="Q64435"/>
<dbReference type="BioGRID" id="220503">
    <property type="interactions" value="1"/>
</dbReference>
<dbReference type="FunCoup" id="Q64435">
    <property type="interactions" value="763"/>
</dbReference>
<dbReference type="STRING" id="10090.ENSMUSP00000108759"/>
<dbReference type="CAZy" id="GT1">
    <property type="family name" value="Glycosyltransferase Family 1"/>
</dbReference>
<dbReference type="GlyCosmos" id="Q64435">
    <property type="glycosylation" value="2 sites, No reported glycans"/>
</dbReference>
<dbReference type="GlyGen" id="Q64435">
    <property type="glycosylation" value="3 sites, 1 O-linked glycan (1 site)"/>
</dbReference>
<dbReference type="iPTMnet" id="Q64435"/>
<dbReference type="PhosphoSitePlus" id="Q64435"/>
<dbReference type="SwissPalm" id="Q64435"/>
<dbReference type="jPOST" id="Q64435"/>
<dbReference type="PaxDb" id="10090-ENSMUSP00000108759"/>
<dbReference type="PeptideAtlas" id="Q64435"/>
<dbReference type="ProteomicsDB" id="275376">
    <molecule id="Q64435-1"/>
</dbReference>
<dbReference type="Pumba" id="Q64435"/>
<dbReference type="DNASU" id="94284"/>
<dbReference type="Ensembl" id="ENSMUST00000014263.6">
    <molecule id="Q64435-1"/>
    <property type="protein sequence ID" value="ENSMUSP00000014263.5"/>
    <property type="gene ID" value="ENSMUSG00000054545.18"/>
</dbReference>
<dbReference type="Ensembl" id="ENSMUST00000113134.8">
    <molecule id="Q64435-1"/>
    <property type="protein sequence ID" value="ENSMUSP00000108759.2"/>
    <property type="gene ID" value="ENSMUSG00000054545.18"/>
</dbReference>
<dbReference type="Ensembl" id="ENSMUST00000113135.6">
    <molecule id="Q64435-1"/>
    <property type="protein sequence ID" value="ENSMUSP00000108760.4"/>
    <property type="gene ID" value="ENSMUSG00000090124.8"/>
</dbReference>
<dbReference type="GeneID" id="94284"/>
<dbReference type="KEGG" id="mmu:94284"/>
<dbReference type="UCSC" id="uc007bye.1">
    <molecule id="Q64435-1"/>
    <property type="organism name" value="mouse"/>
</dbReference>
<dbReference type="AGR" id="MGI:2137698"/>
<dbReference type="CTD" id="94284"/>
<dbReference type="MGI" id="MGI:2137698">
    <property type="gene designation" value="Ugt1a6a"/>
</dbReference>
<dbReference type="VEuPathDB" id="HostDB:ENSMUSG00000054545"/>
<dbReference type="VEuPathDB" id="HostDB:ENSMUSG00000090124"/>
<dbReference type="eggNOG" id="KOG1192">
    <property type="taxonomic scope" value="Eukaryota"/>
</dbReference>
<dbReference type="GeneTree" id="ENSGT00940000163820"/>
<dbReference type="HOGENOM" id="CLU_012949_3_0_1"/>
<dbReference type="InParanoid" id="Q64435"/>
<dbReference type="OMA" id="WLSMENI"/>
<dbReference type="OrthoDB" id="42360at9989"/>
<dbReference type="PhylomeDB" id="Q64435"/>
<dbReference type="TreeFam" id="TF315472"/>
<dbReference type="BRENDA" id="2.4.1.17">
    <property type="organism ID" value="3474"/>
</dbReference>
<dbReference type="Reactome" id="R-MMU-156588">
    <property type="pathway name" value="Glucuronidation"/>
</dbReference>
<dbReference type="Reactome" id="R-MMU-9749641">
    <property type="pathway name" value="Aspirin ADME"/>
</dbReference>
<dbReference type="Reactome" id="R-MMU-9753281">
    <property type="pathway name" value="Paracetamol ADME"/>
</dbReference>
<dbReference type="BioGRID-ORCS" id="94284">
    <property type="hits" value="4 hits in 75 CRISPR screens"/>
</dbReference>
<dbReference type="ChiTaRS" id="Ugt1a6a">
    <property type="organism name" value="mouse"/>
</dbReference>
<dbReference type="PRO" id="PR:Q64435"/>
<dbReference type="Proteomes" id="UP000000589">
    <property type="component" value="Chromosome 1"/>
</dbReference>
<dbReference type="RNAct" id="Q64435">
    <property type="molecule type" value="protein"/>
</dbReference>
<dbReference type="Bgee" id="ENSMUSG00000054545">
    <property type="expression patterns" value="Expressed in urinary bladder and 87 other cell types or tissues"/>
</dbReference>
<dbReference type="ExpressionAtlas" id="Q64435">
    <property type="expression patterns" value="baseline and differential"/>
</dbReference>
<dbReference type="GO" id="GO:0005789">
    <property type="term" value="C:endoplasmic reticulum membrane"/>
    <property type="evidence" value="ECO:0007669"/>
    <property type="project" value="UniProtKB-SubCell"/>
</dbReference>
<dbReference type="GO" id="GO:0005743">
    <property type="term" value="C:mitochondrial inner membrane"/>
    <property type="evidence" value="ECO:0007005"/>
    <property type="project" value="MGI"/>
</dbReference>
<dbReference type="GO" id="GO:0046559">
    <property type="term" value="F:alpha-glucuronidase activity"/>
    <property type="evidence" value="ECO:0000314"/>
    <property type="project" value="MGI"/>
</dbReference>
<dbReference type="GO" id="GO:0015020">
    <property type="term" value="F:glucuronosyltransferase activity"/>
    <property type="evidence" value="ECO:0000314"/>
    <property type="project" value="MGI"/>
</dbReference>
<dbReference type="GO" id="GO:0019585">
    <property type="term" value="P:glucuronate metabolic process"/>
    <property type="evidence" value="ECO:0000314"/>
    <property type="project" value="MGI"/>
</dbReference>
<dbReference type="GO" id="GO:0019853">
    <property type="term" value="P:L-ascorbic acid biosynthetic process"/>
    <property type="evidence" value="ECO:0000316"/>
    <property type="project" value="MGI"/>
</dbReference>
<dbReference type="CDD" id="cd03784">
    <property type="entry name" value="GT1_Gtf-like"/>
    <property type="match status" value="1"/>
</dbReference>
<dbReference type="FunFam" id="3.40.50.2000:FF:000001">
    <property type="entry name" value="UDP-glucuronosyltransferase"/>
    <property type="match status" value="1"/>
</dbReference>
<dbReference type="FunFam" id="3.40.50.2000:FF:000092">
    <property type="entry name" value="UDP-glucuronosyltransferase"/>
    <property type="match status" value="1"/>
</dbReference>
<dbReference type="Gene3D" id="3.40.50.2000">
    <property type="entry name" value="Glycogen Phosphorylase B"/>
    <property type="match status" value="2"/>
</dbReference>
<dbReference type="InterPro" id="IPR050271">
    <property type="entry name" value="UDP-glycosyltransferase"/>
</dbReference>
<dbReference type="InterPro" id="IPR002213">
    <property type="entry name" value="UDP_glucos_trans"/>
</dbReference>
<dbReference type="InterPro" id="IPR035595">
    <property type="entry name" value="UDP_glycos_trans_CS"/>
</dbReference>
<dbReference type="PANTHER" id="PTHR48043">
    <property type="entry name" value="EG:EG0003.4 PROTEIN-RELATED"/>
    <property type="match status" value="1"/>
</dbReference>
<dbReference type="PANTHER" id="PTHR48043:SF161">
    <property type="entry name" value="UDP GLUCURONOSYLTRANSFERASE FAMILY 1 MEMBER A1"/>
    <property type="match status" value="1"/>
</dbReference>
<dbReference type="Pfam" id="PF00201">
    <property type="entry name" value="UDPGT"/>
    <property type="match status" value="1"/>
</dbReference>
<dbReference type="SUPFAM" id="SSF53756">
    <property type="entry name" value="UDP-Glycosyltransferase/glycogen phosphorylase"/>
    <property type="match status" value="1"/>
</dbReference>
<dbReference type="PROSITE" id="PS00375">
    <property type="entry name" value="UDPGT"/>
    <property type="match status" value="1"/>
</dbReference>
<proteinExistence type="evidence at protein level"/>
<name>UD16_MOUSE</name>
<evidence type="ECO:0000250" key="1">
    <source>
        <dbReference type="UniProtKB" id="P19224"/>
    </source>
</evidence>
<evidence type="ECO:0000255" key="2"/>
<evidence type="ECO:0000269" key="3">
    <source>
    </source>
</evidence>
<evidence type="ECO:0000269" key="4">
    <source>
    </source>
</evidence>
<evidence type="ECO:0000305" key="5"/>
<evidence type="ECO:0000312" key="6">
    <source>
        <dbReference type="MGI" id="MGI:2137698"/>
    </source>
</evidence>
<comment type="function">
    <text evidence="1 4">UDP-glucuronosyltransferase (UGT) that catalyzes phase II biotransformation reactions in which lipophilic substrates are conjugated with glucuronic acid to facilitate their inactivation and excretion from the body (PubMed:8068691). Essential for the elimination and detoxification of drugs, xenobiotics and endogenous compounds (PubMed:8068691). Involved in the glucuronidation of arachidonic acid (AA) and AA-derived eicosanoids including 15-HETE and 20-HETE (By similarity). Conjugates small planar phenolic molecules such as 4-nitrophenol, 1-naphthol, and 4-methylumbelliferone. The bulky phenol 4-hydroxybiphenyl, androgens and estrogens are not substrates. 2-hydroxybiphenyl is an excellent substrate (PubMed:8068691). Involved in the glucuronidation of the phytochemical ferulic acid at the phenolic or the carboxylic acid group (By similarity).</text>
</comment>
<comment type="catalytic activity">
    <reaction evidence="4">
        <text>glucuronate acceptor + UDP-alpha-D-glucuronate = acceptor beta-D-glucuronoside + UDP + H(+)</text>
        <dbReference type="Rhea" id="RHEA:21032"/>
        <dbReference type="ChEBI" id="CHEBI:15378"/>
        <dbReference type="ChEBI" id="CHEBI:58052"/>
        <dbReference type="ChEBI" id="CHEBI:58223"/>
        <dbReference type="ChEBI" id="CHEBI:132367"/>
        <dbReference type="ChEBI" id="CHEBI:132368"/>
        <dbReference type="EC" id="2.4.1.17"/>
    </reaction>
    <physiologicalReaction direction="left-to-right" evidence="4">
        <dbReference type="Rhea" id="RHEA:21033"/>
    </physiologicalReaction>
</comment>
<comment type="catalytic activity">
    <reaction evidence="1">
        <text>(5Z,8Z,11Z,14Z)-eicosatetraenoate + UDP-alpha-D-glucuronate = O-[(5Z),(8Z),(11Z),(14Z)-eicosatetraenoyl]-beta-D-glucuronate + UDP</text>
        <dbReference type="Rhea" id="RHEA:79915"/>
        <dbReference type="ChEBI" id="CHEBI:32395"/>
        <dbReference type="ChEBI" id="CHEBI:58052"/>
        <dbReference type="ChEBI" id="CHEBI:58223"/>
        <dbReference type="ChEBI" id="CHEBI:231327"/>
    </reaction>
    <physiologicalReaction direction="left-to-right" evidence="1">
        <dbReference type="Rhea" id="RHEA:79916"/>
    </physiologicalReaction>
</comment>
<comment type="catalytic activity">
    <reaction evidence="1">
        <text>15-hydroxy-(5Z,8Z,11Z,13E)-eicosatetraenoate + UDP-alpha-D-glucuronate = 15-O-(beta-D-glucuronosyl)-(5Z,8Z,11Z,14Z)-eicosatetraenoate + UDP + H(+)</text>
        <dbReference type="Rhea" id="RHEA:79919"/>
        <dbReference type="ChEBI" id="CHEBI:15378"/>
        <dbReference type="ChEBI" id="CHEBI:58052"/>
        <dbReference type="ChEBI" id="CHEBI:58223"/>
        <dbReference type="ChEBI" id="CHEBI:78832"/>
        <dbReference type="ChEBI" id="CHEBI:231329"/>
    </reaction>
    <physiologicalReaction direction="left-to-right" evidence="1">
        <dbReference type="Rhea" id="RHEA:79920"/>
    </physiologicalReaction>
</comment>
<comment type="catalytic activity">
    <reaction evidence="1">
        <text>(E)-ferulate + UDP-alpha-D-glucuronate = (E)-4-O-(beta-D-glucuronosyl)-ferulate + UDP + H(+)</text>
        <dbReference type="Rhea" id="RHEA:79951"/>
        <dbReference type="ChEBI" id="CHEBI:15378"/>
        <dbReference type="ChEBI" id="CHEBI:29749"/>
        <dbReference type="ChEBI" id="CHEBI:58052"/>
        <dbReference type="ChEBI" id="CHEBI:58223"/>
        <dbReference type="ChEBI" id="CHEBI:231331"/>
    </reaction>
    <physiologicalReaction direction="left-to-right" evidence="1">
        <dbReference type="Rhea" id="RHEA:79952"/>
    </physiologicalReaction>
</comment>
<comment type="catalytic activity">
    <reaction evidence="1">
        <text>(E)-ferulate + UDP-alpha-D-glucuronate = (E)-ferulic acid beta-D-glucuronate ester + UDP</text>
        <dbReference type="Rhea" id="RHEA:79955"/>
        <dbReference type="ChEBI" id="CHEBI:29749"/>
        <dbReference type="ChEBI" id="CHEBI:58052"/>
        <dbReference type="ChEBI" id="CHEBI:58223"/>
        <dbReference type="ChEBI" id="CHEBI:231332"/>
    </reaction>
    <physiologicalReaction direction="left-to-right" evidence="1">
        <dbReference type="Rhea" id="RHEA:79956"/>
    </physiologicalReaction>
</comment>
<comment type="subcellular location">
    <subcellularLocation>
        <location>Microsome</location>
    </subcellularLocation>
    <subcellularLocation>
        <location evidence="5">Endoplasmic reticulum membrane</location>
        <topology evidence="5">Single-pass membrane protein</topology>
    </subcellularLocation>
</comment>
<comment type="alternative products">
    <event type="alternative splicing"/>
    <isoform>
        <id>Q64435-1</id>
        <name>1</name>
        <sequence type="displayed"/>
    </isoform>
    <text>A number of isoforms may be produced. Isoforms have a different N-terminal domain and a common C-terminal domain of 245 residues.</text>
</comment>
<comment type="tissue specificity">
    <text evidence="3">Expressed in liver, kidney and at very low levels in colon.</text>
</comment>
<comment type="induction">
    <text>By dioxin.</text>
</comment>
<comment type="similarity">
    <text evidence="5">Belongs to the UDP-glycosyltransferase family.</text>
</comment>
<keyword id="KW-0025">Alternative splicing</keyword>
<keyword id="KW-0256">Endoplasmic reticulum</keyword>
<keyword id="KW-0325">Glycoprotein</keyword>
<keyword id="KW-0328">Glycosyltransferase</keyword>
<keyword id="KW-0472">Membrane</keyword>
<keyword id="KW-0492">Microsome</keyword>
<keyword id="KW-1185">Reference proteome</keyword>
<keyword id="KW-0732">Signal</keyword>
<keyword id="KW-0808">Transferase</keyword>
<keyword id="KW-0812">Transmembrane</keyword>
<keyword id="KW-1133">Transmembrane helix</keyword>
<organism>
    <name type="scientific">Mus musculus</name>
    <name type="common">Mouse</name>
    <dbReference type="NCBI Taxonomy" id="10090"/>
    <lineage>
        <taxon>Eukaryota</taxon>
        <taxon>Metazoa</taxon>
        <taxon>Chordata</taxon>
        <taxon>Craniata</taxon>
        <taxon>Vertebrata</taxon>
        <taxon>Euteleostomi</taxon>
        <taxon>Mammalia</taxon>
        <taxon>Eutheria</taxon>
        <taxon>Euarchontoglires</taxon>
        <taxon>Glires</taxon>
        <taxon>Rodentia</taxon>
        <taxon>Myomorpha</taxon>
        <taxon>Muroidea</taxon>
        <taxon>Muridae</taxon>
        <taxon>Murinae</taxon>
        <taxon>Mus</taxon>
        <taxon>Mus</taxon>
    </lineage>
</organism>
<reference key="1">
    <citation type="journal article" date="1994" name="Biochemistry">
        <title>Cloning and characterization of cDNAs encoding mouse Ugt1.6 and rabbit UGT1.6: differential induction by 2,3,7,8-tetrachlorodibenzo-p-dioxin.</title>
        <authorList>
            <person name="Lamb J.G."/>
            <person name="Straub P."/>
            <person name="Tukey R.H."/>
        </authorList>
    </citation>
    <scope>NUCLEOTIDE SEQUENCE [MRNA]</scope>
    <scope>CATALYTIC ACTIVITY</scope>
    <source>
        <strain>C57BL/6J</strain>
        <tissue>Liver</tissue>
    </source>
</reference>
<reference key="2">
    <citation type="journal article" date="1994" name="Toxicologist">
        <title>Characterization of the murine dioxin-inducible UDP glucuronosyltransferase (Ugt1-06) gene.</title>
        <authorList>
            <person name="Reuter S.F."/>
            <person name="Vasiliou V."/>
            <person name="Puga A."/>
            <person name="Nebert D.W."/>
        </authorList>
    </citation>
    <scope>NUCLEOTIDE SEQUENCE [MRNA]</scope>
    <source>
        <strain>C57BL/6 X CBA</strain>
        <tissue>Liver</tissue>
    </source>
</reference>
<reference key="3">
    <citation type="journal article" date="1995" name="Biochem. Genet.">
        <title>Isolation of cDNAs for mouse phenol and bilirubin UDP-glucuronosyltransferases and mapping of the mouse gene for phenol UDP-glucuronosyltransferase (Ugtla1) to chromosome 1 by restriction fragment length variations.</title>
        <authorList>
            <person name="Koiwai O."/>
            <person name="Hasada K."/>
            <person name="Yasui Y."/>
            <person name="Sakai Y."/>
            <person name="Sato H."/>
            <person name="Watanabe T."/>
        </authorList>
    </citation>
    <scope>NUCLEOTIDE SEQUENCE [MRNA]</scope>
    <source>
        <strain>BALB/cJ</strain>
        <tissue>Liver</tissue>
    </source>
</reference>
<reference key="4">
    <citation type="journal article" date="2004" name="Genome Res.">
        <title>Multiple variable first exons: a mechanism for cell- and tissue-specific gene regulation.</title>
        <authorList>
            <person name="Zhang T."/>
            <person name="Haws P."/>
            <person name="Wu Q."/>
        </authorList>
    </citation>
    <scope>NUCLEOTIDE SEQUENCE [MRNA]</scope>
    <scope>TISSUE SPECIFICITY</scope>
    <source>
        <tissue>Kidney</tissue>
    </source>
</reference>
<reference key="5">
    <citation type="journal article" date="2010" name="Cell">
        <title>A tissue-specific atlas of mouse protein phosphorylation and expression.</title>
        <authorList>
            <person name="Huttlin E.L."/>
            <person name="Jedrychowski M.P."/>
            <person name="Elias J.E."/>
            <person name="Goswami T."/>
            <person name="Rad R."/>
            <person name="Beausoleil S.A."/>
            <person name="Villen J."/>
            <person name="Haas W."/>
            <person name="Sowa M.E."/>
            <person name="Gygi S.P."/>
        </authorList>
    </citation>
    <scope>IDENTIFICATION BY MASS SPECTROMETRY [LARGE SCALE ANALYSIS]</scope>
    <source>
        <tissue>Brown adipose tissue</tissue>
        <tissue>Kidney</tissue>
        <tissue>Liver</tissue>
        <tissue>Lung</tissue>
        <tissue>Testis</tissue>
    </source>
</reference>
<protein>
    <recommendedName>
        <fullName>UDP-glucuronosyltransferase 1A6</fullName>
        <shortName evidence="1">UGT1A6</shortName>
        <ecNumber evidence="4">2.4.1.17</ecNumber>
    </recommendedName>
    <alternativeName>
        <fullName>Phenol UDP-glucuronosyltransferase</fullName>
    </alternativeName>
    <alternativeName>
        <fullName>UDP-glucuronosyltransferase 1-6</fullName>
        <shortName>UDPGT 1-6</shortName>
        <shortName>UGT1*6</shortName>
        <shortName>UGT1-06</shortName>
        <shortName>UGT1.6</shortName>
    </alternativeName>
    <alternativeName>
        <fullName>UGP1A1</fullName>
    </alternativeName>
    <alternativeName>
        <fullName>UGT1A7</fullName>
    </alternativeName>
</protein>
<feature type="signal peptide" evidence="2">
    <location>
        <begin position="1"/>
        <end position="26"/>
    </location>
</feature>
<feature type="chain" id="PRO_0000036017" description="UDP-glucuronosyltransferase 1A6">
    <location>
        <begin position="27"/>
        <end position="531"/>
    </location>
</feature>
<feature type="transmembrane region" description="Helical" evidence="2">
    <location>
        <begin position="489"/>
        <end position="505"/>
    </location>
</feature>
<feature type="glycosylation site" description="N-linked (GlcNAc...) asparagine" evidence="2">
    <location>
        <position position="293"/>
    </location>
</feature>
<feature type="glycosylation site" description="N-linked (GlcNAc...) asparagine" evidence="2">
    <location>
        <position position="431"/>
    </location>
</feature>
<feature type="sequence conflict" description="In Ref. 3; BAA13483." evidence="5" ref="3">
    <original>K</original>
    <variation>G</variation>
    <location>
        <position position="43"/>
    </location>
</feature>
<feature type="sequence conflict" description="In Ref. 3; BAA13483." evidence="5" ref="3">
    <original>E</original>
    <variation>R</variation>
    <location>
        <position position="69"/>
    </location>
</feature>
<feature type="sequence conflict" description="In Ref. 4; AAP48596." evidence="5" ref="4">
    <original>T</original>
    <variation>N</variation>
    <location>
        <position position="89"/>
    </location>
</feature>
<feature type="sequence conflict" description="In Ref. 4; AAP48596." evidence="5" ref="4">
    <original>P</original>
    <variation>L</variation>
    <location>
        <position position="101"/>
    </location>
</feature>
<feature type="sequence conflict" description="In Ref. 3; BAA13483." evidence="5" ref="3">
    <original>S</original>
    <variation>L</variation>
    <location>
        <position position="104"/>
    </location>
</feature>
<feature type="sequence conflict" description="In Ref. 4; AAP48596." evidence="5" ref="4">
    <original>D</original>
    <variation>G</variation>
    <location>
        <position position="201"/>
    </location>
</feature>
<feature type="sequence conflict" description="In Ref. 3; BAA13483." evidence="5" ref="3">
    <original>L</original>
    <variation>P</variation>
    <location>
        <position position="225"/>
    </location>
</feature>
<feature type="sequence conflict" description="In Ref. 4; AAP48596." evidence="5" ref="4">
    <original>I</original>
    <variation>V</variation>
    <location>
        <position position="231"/>
    </location>
</feature>
<feature type="sequence conflict" description="In Ref. 2; AAA51871." evidence="5" ref="2">
    <original>H</original>
    <variation>K</variation>
    <location>
        <position position="466"/>
    </location>
</feature>
<feature type="sequence conflict" description="In Ref. 4; AAP48596." evidence="5" ref="4">
    <original>G</original>
    <variation>V</variation>
    <location>
        <position position="518"/>
    </location>
</feature>
<accession>Q64435</accession>
<accession>P70692</accession>
<accession>Q62580</accession>
<accession>Q6XL47</accession>